<proteinExistence type="inferred from homology"/>
<keyword id="KW-0175">Coiled coil</keyword>
<keyword id="KW-0967">Endosome</keyword>
<keyword id="KW-1185">Reference proteome</keyword>
<keyword id="KW-0813">Transport</keyword>
<organism>
    <name type="scientific">Eremothecium gossypii (strain ATCC 10895 / CBS 109.51 / FGSC 9923 / NRRL Y-1056)</name>
    <name type="common">Yeast</name>
    <name type="synonym">Ashbya gossypii</name>
    <dbReference type="NCBI Taxonomy" id="284811"/>
    <lineage>
        <taxon>Eukaryota</taxon>
        <taxon>Fungi</taxon>
        <taxon>Dikarya</taxon>
        <taxon>Ascomycota</taxon>
        <taxon>Saccharomycotina</taxon>
        <taxon>Saccharomycetes</taxon>
        <taxon>Saccharomycetales</taxon>
        <taxon>Saccharomycetaceae</taxon>
        <taxon>Eremothecium</taxon>
    </lineage>
</organism>
<reference key="1">
    <citation type="journal article" date="2004" name="Science">
        <title>The Ashbya gossypii genome as a tool for mapping the ancient Saccharomyces cerevisiae genome.</title>
        <authorList>
            <person name="Dietrich F.S."/>
            <person name="Voegeli S."/>
            <person name="Brachat S."/>
            <person name="Lerch A."/>
            <person name="Gates K."/>
            <person name="Steiner S."/>
            <person name="Mohr C."/>
            <person name="Poehlmann R."/>
            <person name="Luedi P."/>
            <person name="Choi S."/>
            <person name="Wing R.A."/>
            <person name="Flavier A."/>
            <person name="Gaffney T.D."/>
            <person name="Philippsen P."/>
        </authorList>
    </citation>
    <scope>NUCLEOTIDE SEQUENCE [LARGE SCALE GENOMIC DNA]</scope>
    <source>
        <strain>ATCC 10895 / CBS 109.51 / FGSC 9923 / NRRL Y-1056</strain>
    </source>
</reference>
<reference key="2">
    <citation type="journal article" date="2013" name="G3 (Bethesda)">
        <title>Genomes of Ashbya fungi isolated from insects reveal four mating-type loci, numerous translocations, lack of transposons, and distinct gene duplications.</title>
        <authorList>
            <person name="Dietrich F.S."/>
            <person name="Voegeli S."/>
            <person name="Kuo S."/>
            <person name="Philippsen P."/>
        </authorList>
    </citation>
    <scope>GENOME REANNOTATION</scope>
    <source>
        <strain>ATCC 10895 / CBS 109.51 / FGSC 9923 / NRRL Y-1056</strain>
    </source>
</reference>
<gene>
    <name type="primary">BLI1</name>
    <name type="ordered locus">ABR062W</name>
</gene>
<dbReference type="EMBL" id="AE016815">
    <property type="protein sequence ID" value="AAS50832.1"/>
    <property type="molecule type" value="Genomic_DNA"/>
</dbReference>
<dbReference type="RefSeq" id="NP_983008.1">
    <property type="nucleotide sequence ID" value="NM_208361.1"/>
</dbReference>
<dbReference type="FunCoup" id="Q75DG4">
    <property type="interactions" value="43"/>
</dbReference>
<dbReference type="STRING" id="284811.Q75DG4"/>
<dbReference type="EnsemblFungi" id="AAS50832">
    <property type="protein sequence ID" value="AAS50832"/>
    <property type="gene ID" value="AGOS_ABR062W"/>
</dbReference>
<dbReference type="GeneID" id="4619112"/>
<dbReference type="KEGG" id="ago:AGOS_ABR062W"/>
<dbReference type="eggNOG" id="ENOG502S8B7">
    <property type="taxonomic scope" value="Eukaryota"/>
</dbReference>
<dbReference type="HOGENOM" id="CLU_168467_0_0_1"/>
<dbReference type="InParanoid" id="Q75DG4"/>
<dbReference type="OMA" id="AVANHEW"/>
<dbReference type="OrthoDB" id="4059150at2759"/>
<dbReference type="Proteomes" id="UP000000591">
    <property type="component" value="Chromosome II"/>
</dbReference>
<dbReference type="GO" id="GO:0005768">
    <property type="term" value="C:endosome"/>
    <property type="evidence" value="ECO:0007669"/>
    <property type="project" value="UniProtKB-SubCell"/>
</dbReference>
<dbReference type="InterPro" id="IPR020491">
    <property type="entry name" value="BLI1"/>
</dbReference>
<dbReference type="Pfam" id="PF17324">
    <property type="entry name" value="BLI1"/>
    <property type="match status" value="1"/>
</dbReference>
<sequence length="112" mass="13179">MNEKQLRQQLDRCLDHVQEHVDMLSARAISKLSGDAVANHEWLSELSGRYPTRSAEELQQFRELKDGYVKKLDTLETEVKYLEDLGQELAEFQNELSVKLQRIRRNSYVQEN</sequence>
<name>BLI1_EREGS</name>
<evidence type="ECO:0000250" key="1"/>
<evidence type="ECO:0000255" key="2"/>
<evidence type="ECO:0000305" key="3"/>
<comment type="function">
    <text evidence="1">Component of the biogenesis of lysosome-related organelles complex-1 (BLOC-1) involved in endosomal cargo sorting.</text>
</comment>
<comment type="subunit">
    <text evidence="1">Component of the biogenesis of lysosome-related organelles complex-1 (BLOC-1).</text>
</comment>
<comment type="subcellular location">
    <subcellularLocation>
        <location evidence="1">Endosome</location>
    </subcellularLocation>
</comment>
<comment type="similarity">
    <text evidence="3">Belongs to the BLI1 family.</text>
</comment>
<accession>Q75DG4</accession>
<protein>
    <recommendedName>
        <fullName>Biogenesis of lysosome-related organelles complex 1 subunit BLI1</fullName>
        <shortName>BLOC-1 subunit BLI1</shortName>
    </recommendedName>
    <alternativeName>
        <fullName>BLOC-1 interactor 1</fullName>
    </alternativeName>
</protein>
<feature type="chain" id="PRO_0000410612" description="Biogenesis of lysosome-related organelles complex 1 subunit BLI1">
    <location>
        <begin position="1"/>
        <end position="112"/>
    </location>
</feature>
<feature type="coiled-coil region" evidence="2">
    <location>
        <begin position="55"/>
        <end position="105"/>
    </location>
</feature>